<dbReference type="EC" id="7.1.1.-" evidence="1"/>
<dbReference type="EMBL" id="CP000058">
    <property type="protein sequence ID" value="AAZ34355.1"/>
    <property type="molecule type" value="Genomic_DNA"/>
</dbReference>
<dbReference type="RefSeq" id="WP_002554011.1">
    <property type="nucleotide sequence ID" value="NC_005773.3"/>
</dbReference>
<dbReference type="SMR" id="Q48H54"/>
<dbReference type="KEGG" id="psp:PSPPH_3109"/>
<dbReference type="eggNOG" id="COG0838">
    <property type="taxonomic scope" value="Bacteria"/>
</dbReference>
<dbReference type="HOGENOM" id="CLU_119549_2_1_6"/>
<dbReference type="Proteomes" id="UP000000551">
    <property type="component" value="Chromosome"/>
</dbReference>
<dbReference type="GO" id="GO:0030964">
    <property type="term" value="C:NADH dehydrogenase complex"/>
    <property type="evidence" value="ECO:0007669"/>
    <property type="project" value="TreeGrafter"/>
</dbReference>
<dbReference type="GO" id="GO:0005886">
    <property type="term" value="C:plasma membrane"/>
    <property type="evidence" value="ECO:0007669"/>
    <property type="project" value="UniProtKB-SubCell"/>
</dbReference>
<dbReference type="GO" id="GO:0008137">
    <property type="term" value="F:NADH dehydrogenase (ubiquinone) activity"/>
    <property type="evidence" value="ECO:0007669"/>
    <property type="project" value="InterPro"/>
</dbReference>
<dbReference type="GO" id="GO:0050136">
    <property type="term" value="F:NADH:ubiquinone reductase (non-electrogenic) activity"/>
    <property type="evidence" value="ECO:0007669"/>
    <property type="project" value="UniProtKB-UniRule"/>
</dbReference>
<dbReference type="GO" id="GO:0048038">
    <property type="term" value="F:quinone binding"/>
    <property type="evidence" value="ECO:0007669"/>
    <property type="project" value="UniProtKB-KW"/>
</dbReference>
<dbReference type="FunFam" id="1.20.58.1610:FF:000003">
    <property type="entry name" value="NADH-quinone oxidoreductase subunit A"/>
    <property type="match status" value="1"/>
</dbReference>
<dbReference type="Gene3D" id="1.20.58.1610">
    <property type="entry name" value="NADH:ubiquinone/plastoquinone oxidoreductase, chain 3"/>
    <property type="match status" value="1"/>
</dbReference>
<dbReference type="HAMAP" id="MF_01394">
    <property type="entry name" value="NDH1_NuoA"/>
    <property type="match status" value="1"/>
</dbReference>
<dbReference type="InterPro" id="IPR023043">
    <property type="entry name" value="NAD(P)H_OxRDtase_bac/plastid"/>
</dbReference>
<dbReference type="InterPro" id="IPR000440">
    <property type="entry name" value="NADH_UbQ/plastoQ_OxRdtase_su3"/>
</dbReference>
<dbReference type="InterPro" id="IPR038430">
    <property type="entry name" value="NDAH_ubi_oxred_su3_sf"/>
</dbReference>
<dbReference type="PANTHER" id="PTHR11058:SF21">
    <property type="entry name" value="NADH-QUINONE OXIDOREDUCTASE SUBUNIT A"/>
    <property type="match status" value="1"/>
</dbReference>
<dbReference type="PANTHER" id="PTHR11058">
    <property type="entry name" value="NADH-UBIQUINONE OXIDOREDUCTASE CHAIN 3"/>
    <property type="match status" value="1"/>
</dbReference>
<dbReference type="Pfam" id="PF00507">
    <property type="entry name" value="Oxidored_q4"/>
    <property type="match status" value="1"/>
</dbReference>
<name>NUOA_PSE14</name>
<evidence type="ECO:0000255" key="1">
    <source>
        <dbReference type="HAMAP-Rule" id="MF_01394"/>
    </source>
</evidence>
<feature type="chain" id="PRO_0000362745" description="NADH-quinone oxidoreductase subunit A">
    <location>
        <begin position="1"/>
        <end position="137"/>
    </location>
</feature>
<feature type="transmembrane region" description="Helical" evidence="1">
    <location>
        <begin position="12"/>
        <end position="32"/>
    </location>
</feature>
<feature type="transmembrane region" description="Helical" evidence="1">
    <location>
        <begin position="66"/>
        <end position="86"/>
    </location>
</feature>
<feature type="transmembrane region" description="Helical" evidence="1">
    <location>
        <begin position="95"/>
        <end position="115"/>
    </location>
</feature>
<proteinExistence type="inferred from homology"/>
<reference key="1">
    <citation type="journal article" date="2005" name="J. Bacteriol.">
        <title>Whole-genome sequence analysis of Pseudomonas syringae pv. phaseolicola 1448A reveals divergence among pathovars in genes involved in virulence and transposition.</title>
        <authorList>
            <person name="Joardar V."/>
            <person name="Lindeberg M."/>
            <person name="Jackson R.W."/>
            <person name="Selengut J."/>
            <person name="Dodson R."/>
            <person name="Brinkac L.M."/>
            <person name="Daugherty S.C."/>
            <person name="DeBoy R.T."/>
            <person name="Durkin A.S."/>
            <person name="Gwinn Giglio M."/>
            <person name="Madupu R."/>
            <person name="Nelson W.C."/>
            <person name="Rosovitz M.J."/>
            <person name="Sullivan S.A."/>
            <person name="Crabtree J."/>
            <person name="Creasy T."/>
            <person name="Davidsen T.M."/>
            <person name="Haft D.H."/>
            <person name="Zafar N."/>
            <person name="Zhou L."/>
            <person name="Halpin R."/>
            <person name="Holley T."/>
            <person name="Khouri H.M."/>
            <person name="Feldblyum T.V."/>
            <person name="White O."/>
            <person name="Fraser C.M."/>
            <person name="Chatterjee A.K."/>
            <person name="Cartinhour S."/>
            <person name="Schneider D."/>
            <person name="Mansfield J.W."/>
            <person name="Collmer A."/>
            <person name="Buell R."/>
        </authorList>
    </citation>
    <scope>NUCLEOTIDE SEQUENCE [LARGE SCALE GENOMIC DNA]</scope>
    <source>
        <strain>1448A / Race 6</strain>
    </source>
</reference>
<accession>Q48H54</accession>
<comment type="function">
    <text evidence="1">NDH-1 shuttles electrons from NADH, via FMN and iron-sulfur (Fe-S) centers, to quinones in the respiratory chain. The immediate electron acceptor for the enzyme in this species is believed to be ubiquinone. Couples the redox reaction to proton translocation (for every two electrons transferred, four hydrogen ions are translocated across the cytoplasmic membrane), and thus conserves the redox energy in a proton gradient.</text>
</comment>
<comment type="catalytic activity">
    <reaction evidence="1">
        <text>a quinone + NADH + 5 H(+)(in) = a quinol + NAD(+) + 4 H(+)(out)</text>
        <dbReference type="Rhea" id="RHEA:57888"/>
        <dbReference type="ChEBI" id="CHEBI:15378"/>
        <dbReference type="ChEBI" id="CHEBI:24646"/>
        <dbReference type="ChEBI" id="CHEBI:57540"/>
        <dbReference type="ChEBI" id="CHEBI:57945"/>
        <dbReference type="ChEBI" id="CHEBI:132124"/>
    </reaction>
</comment>
<comment type="subunit">
    <text evidence="1">NDH-1 is composed of 13 different subunits. Subunits NuoA, H, J, K, L, M, N constitute the membrane sector of the complex.</text>
</comment>
<comment type="subcellular location">
    <subcellularLocation>
        <location evidence="1">Cell inner membrane</location>
        <topology evidence="1">Multi-pass membrane protein</topology>
    </subcellularLocation>
</comment>
<comment type="similarity">
    <text evidence="1">Belongs to the complex I subunit 3 family.</text>
</comment>
<gene>
    <name evidence="1" type="primary">nuoA</name>
    <name type="ordered locus">PSPPH_3109</name>
</gene>
<sequence>MPESTGLIAHNWGFAIFLLGVVGLCAFMLGLSSLLGSKAWGRSKNEPFESGMLPTGSARLRLSAKFYLVAMLFVIFDIEALFLFAWSVSVRESGWTGFVEALVFIAILLAGLVYLWRVGALDWAPEGRRNRQAKLKQ</sequence>
<protein>
    <recommendedName>
        <fullName evidence="1">NADH-quinone oxidoreductase subunit A</fullName>
        <ecNumber evidence="1">7.1.1.-</ecNumber>
    </recommendedName>
    <alternativeName>
        <fullName evidence="1">NADH dehydrogenase I subunit A</fullName>
    </alternativeName>
    <alternativeName>
        <fullName evidence="1">NDH-1 subunit A</fullName>
    </alternativeName>
    <alternativeName>
        <fullName evidence="1">NUO1</fullName>
    </alternativeName>
</protein>
<organism>
    <name type="scientific">Pseudomonas savastanoi pv. phaseolicola (strain 1448A / Race 6)</name>
    <name type="common">Pseudomonas syringae pv. phaseolicola (strain 1448A / Race 6)</name>
    <dbReference type="NCBI Taxonomy" id="264730"/>
    <lineage>
        <taxon>Bacteria</taxon>
        <taxon>Pseudomonadati</taxon>
        <taxon>Pseudomonadota</taxon>
        <taxon>Gammaproteobacteria</taxon>
        <taxon>Pseudomonadales</taxon>
        <taxon>Pseudomonadaceae</taxon>
        <taxon>Pseudomonas</taxon>
    </lineage>
</organism>
<keyword id="KW-0997">Cell inner membrane</keyword>
<keyword id="KW-1003">Cell membrane</keyword>
<keyword id="KW-0472">Membrane</keyword>
<keyword id="KW-0520">NAD</keyword>
<keyword id="KW-0874">Quinone</keyword>
<keyword id="KW-1278">Translocase</keyword>
<keyword id="KW-0812">Transmembrane</keyword>
<keyword id="KW-1133">Transmembrane helix</keyword>
<keyword id="KW-0813">Transport</keyword>
<keyword id="KW-0830">Ubiquinone</keyword>